<reference key="1">
    <citation type="journal article" date="1998" name="Regul. Pept.">
        <title>Characterization and molecular cloning of vascular neuropeptide Y receptor subtypes in pig and dog.</title>
        <authorList>
            <person name="Malmstroem R.E."/>
            <person name="Hoekfelt T."/>
            <person name="Bjoerkman J.-A."/>
            <person name="Nihlen C."/>
            <person name="Bystroem M."/>
            <person name="Ekstrand A.J."/>
            <person name="Lundberg J.M."/>
        </authorList>
    </citation>
    <scope>NUCLEOTIDE SEQUENCE</scope>
    <source>
        <tissue>Spleen</tissue>
    </source>
</reference>
<reference key="2">
    <citation type="submission" date="2000-08" db="EMBL/GenBank/DDBJ databases">
        <authorList>
            <person name="Ekstrand A.J."/>
        </authorList>
    </citation>
    <scope>SEQUENCE REVISION TO 207</scope>
</reference>
<reference key="3">
    <citation type="journal article" date="2001" name="Peptides">
        <title>Origins of the many NPY-family receptors in mammals.</title>
        <authorList>
            <person name="Larhammar D."/>
            <person name="Wraith A."/>
            <person name="Berglund M.M."/>
            <person name="Holmberg S.K."/>
            <person name="Lundell I."/>
        </authorList>
    </citation>
    <scope>NUCLEOTIDE SEQUENCE [GENOMIC DNA]</scope>
</reference>
<gene>
    <name type="primary">NPY2R</name>
</gene>
<dbReference type="EMBL" id="AF005780">
    <property type="protein sequence ID" value="AAC26670.2"/>
    <property type="molecule type" value="mRNA"/>
</dbReference>
<dbReference type="EMBL" id="AF106082">
    <property type="protein sequence ID" value="AAD13777.1"/>
    <property type="status" value="ALT_INIT"/>
    <property type="molecule type" value="Genomic_DNA"/>
</dbReference>
<dbReference type="RefSeq" id="NP_999315.1">
    <property type="nucleotide sequence ID" value="NM_214150.1"/>
</dbReference>
<dbReference type="SMR" id="O02836"/>
<dbReference type="FunCoup" id="O02836">
    <property type="interactions" value="190"/>
</dbReference>
<dbReference type="STRING" id="9823.ENSSSCP00000009597"/>
<dbReference type="GlyCosmos" id="O02836">
    <property type="glycosylation" value="1 site, No reported glycans"/>
</dbReference>
<dbReference type="GlyGen" id="O02836">
    <property type="glycosylation" value="1 site"/>
</dbReference>
<dbReference type="PaxDb" id="9823-ENSSSCP00000009597"/>
<dbReference type="GeneID" id="397291"/>
<dbReference type="KEGG" id="ssc:397291"/>
<dbReference type="CTD" id="4887"/>
<dbReference type="eggNOG" id="KOG3656">
    <property type="taxonomic scope" value="Eukaryota"/>
</dbReference>
<dbReference type="InParanoid" id="O02836"/>
<dbReference type="OrthoDB" id="9046662at2759"/>
<dbReference type="Proteomes" id="UP000008227">
    <property type="component" value="Unplaced"/>
</dbReference>
<dbReference type="Proteomes" id="UP000314985">
    <property type="component" value="Unplaced"/>
</dbReference>
<dbReference type="Proteomes" id="UP000694570">
    <property type="component" value="Unplaced"/>
</dbReference>
<dbReference type="Proteomes" id="UP000694571">
    <property type="component" value="Unplaced"/>
</dbReference>
<dbReference type="Proteomes" id="UP000694720">
    <property type="component" value="Unplaced"/>
</dbReference>
<dbReference type="Proteomes" id="UP000694722">
    <property type="component" value="Unplaced"/>
</dbReference>
<dbReference type="Proteomes" id="UP000694723">
    <property type="component" value="Unplaced"/>
</dbReference>
<dbReference type="Proteomes" id="UP000694724">
    <property type="component" value="Unplaced"/>
</dbReference>
<dbReference type="Proteomes" id="UP000694725">
    <property type="component" value="Unplaced"/>
</dbReference>
<dbReference type="Proteomes" id="UP000694726">
    <property type="component" value="Unplaced"/>
</dbReference>
<dbReference type="Proteomes" id="UP000694727">
    <property type="component" value="Unplaced"/>
</dbReference>
<dbReference type="Proteomes" id="UP000694728">
    <property type="component" value="Unplaced"/>
</dbReference>
<dbReference type="GO" id="GO:0005886">
    <property type="term" value="C:plasma membrane"/>
    <property type="evidence" value="ECO:0007669"/>
    <property type="project" value="UniProtKB-SubCell"/>
</dbReference>
<dbReference type="GO" id="GO:0004983">
    <property type="term" value="F:neuropeptide Y receptor activity"/>
    <property type="evidence" value="ECO:0007669"/>
    <property type="project" value="InterPro"/>
</dbReference>
<dbReference type="CDD" id="cd15399">
    <property type="entry name" value="7tmA_NPY2R"/>
    <property type="match status" value="1"/>
</dbReference>
<dbReference type="FunFam" id="1.20.1070.10:FF:000158">
    <property type="entry name" value="Neuropeptide Y receptor type 2"/>
    <property type="match status" value="1"/>
</dbReference>
<dbReference type="Gene3D" id="1.20.1070.10">
    <property type="entry name" value="Rhodopsin 7-helix transmembrane proteins"/>
    <property type="match status" value="1"/>
</dbReference>
<dbReference type="InterPro" id="IPR000276">
    <property type="entry name" value="GPCR_Rhodpsn"/>
</dbReference>
<dbReference type="InterPro" id="IPR017452">
    <property type="entry name" value="GPCR_Rhodpsn_7TM"/>
</dbReference>
<dbReference type="InterPro" id="IPR001358">
    <property type="entry name" value="NPY2_rcpt"/>
</dbReference>
<dbReference type="InterPro" id="IPR000611">
    <property type="entry name" value="NPY_rcpt"/>
</dbReference>
<dbReference type="PANTHER" id="PTHR24235">
    <property type="entry name" value="NEUROPEPTIDE Y RECEPTOR"/>
    <property type="match status" value="1"/>
</dbReference>
<dbReference type="PANTHER" id="PTHR24235:SF20">
    <property type="entry name" value="NEUROPEPTIDE Y RECEPTOR TYPE 2"/>
    <property type="match status" value="1"/>
</dbReference>
<dbReference type="Pfam" id="PF00001">
    <property type="entry name" value="7tm_1"/>
    <property type="match status" value="1"/>
</dbReference>
<dbReference type="PRINTS" id="PR00237">
    <property type="entry name" value="GPCRRHODOPSN"/>
</dbReference>
<dbReference type="PRINTS" id="PR01014">
    <property type="entry name" value="NRPEPTIDEY2R"/>
</dbReference>
<dbReference type="PRINTS" id="PR01012">
    <property type="entry name" value="NRPEPTIDEYR"/>
</dbReference>
<dbReference type="SMART" id="SM01381">
    <property type="entry name" value="7TM_GPCR_Srsx"/>
    <property type="match status" value="1"/>
</dbReference>
<dbReference type="SUPFAM" id="SSF81321">
    <property type="entry name" value="Family A G protein-coupled receptor-like"/>
    <property type="match status" value="1"/>
</dbReference>
<dbReference type="PROSITE" id="PS00237">
    <property type="entry name" value="G_PROTEIN_RECEP_F1_1"/>
    <property type="match status" value="1"/>
</dbReference>
<dbReference type="PROSITE" id="PS50262">
    <property type="entry name" value="G_PROTEIN_RECEP_F1_2"/>
    <property type="match status" value="1"/>
</dbReference>
<sequence>MGPIGAEADENQTVEEMKMEPSGPGHTTPRGELAPDSEPELKDSTKLIEVQIILILAYCSIILLGVVGNSLVIHVVIKFKSMRTVTNFFIANLAVADLLVNTLCLPFTLTYTLMGEWKMGPVLCHLVPYAQGLAVQVSTITLTVIALDRHRCIVYHLESKISKRISFLIIGLAWGISALLASPLAIFREYSLIEIIPDFEIVACTEKWPGEEKSIYGTVYSLSSLLILYVLPLGIISFSYARIWSKLKNHVSPGGVNDHYHQRRQKTTKMLVCVVVVFAVSWLPLHAFQLAVDIDSQVLDLKEYKLIFTVFHIIAMCSTFANPLLYGWMNSNYRKAFLSAFRCEQRLDAIHSEVSMTSKAKKNLEATKNGGPDDSFTEATNV</sequence>
<comment type="function">
    <text>Receptor for neuropeptide Y and peptide YY.</text>
</comment>
<comment type="subcellular location">
    <subcellularLocation>
        <location>Cell membrane</location>
        <topology>Multi-pass membrane protein</topology>
    </subcellularLocation>
</comment>
<comment type="similarity">
    <text evidence="2">Belongs to the G-protein coupled receptor 1 family.</text>
</comment>
<comment type="sequence caution" evidence="4">
    <conflict type="erroneous initiation">
        <sequence resource="EMBL-CDS" id="AAD13777"/>
    </conflict>
</comment>
<evidence type="ECO:0000255" key="1"/>
<evidence type="ECO:0000255" key="2">
    <source>
        <dbReference type="PROSITE-ProRule" id="PRU00521"/>
    </source>
</evidence>
<evidence type="ECO:0000256" key="3">
    <source>
        <dbReference type="SAM" id="MobiDB-lite"/>
    </source>
</evidence>
<evidence type="ECO:0000305" key="4"/>
<feature type="chain" id="PRO_0000069932" description="Neuropeptide Y receptor type 2">
    <location>
        <begin position="1"/>
        <end position="382"/>
    </location>
</feature>
<feature type="topological domain" description="Extracellular" evidence="1">
    <location>
        <begin position="1"/>
        <end position="46"/>
    </location>
</feature>
<feature type="transmembrane region" description="Helical; Name=1" evidence="1">
    <location>
        <begin position="47"/>
        <end position="67"/>
    </location>
</feature>
<feature type="topological domain" description="Cytoplasmic" evidence="1">
    <location>
        <begin position="68"/>
        <end position="87"/>
    </location>
</feature>
<feature type="transmembrane region" description="Helical; Name=2" evidence="1">
    <location>
        <begin position="88"/>
        <end position="108"/>
    </location>
</feature>
<feature type="topological domain" description="Extracellular" evidence="1">
    <location>
        <begin position="109"/>
        <end position="125"/>
    </location>
</feature>
<feature type="transmembrane region" description="Helical; Name=3" evidence="1">
    <location>
        <begin position="126"/>
        <end position="146"/>
    </location>
</feature>
<feature type="topological domain" description="Cytoplasmic" evidence="1">
    <location>
        <begin position="147"/>
        <end position="166"/>
    </location>
</feature>
<feature type="transmembrane region" description="Helical; Name=4" evidence="1">
    <location>
        <begin position="167"/>
        <end position="187"/>
    </location>
</feature>
<feature type="topological domain" description="Extracellular" evidence="1">
    <location>
        <begin position="188"/>
        <end position="217"/>
    </location>
</feature>
<feature type="transmembrane region" description="Helical; Name=5" evidence="1">
    <location>
        <begin position="218"/>
        <end position="238"/>
    </location>
</feature>
<feature type="topological domain" description="Cytoplasmic" evidence="1">
    <location>
        <begin position="239"/>
        <end position="269"/>
    </location>
</feature>
<feature type="transmembrane region" description="Helical; Name=6" evidence="1">
    <location>
        <begin position="270"/>
        <end position="290"/>
    </location>
</feature>
<feature type="topological domain" description="Extracellular" evidence="1">
    <location>
        <begin position="291"/>
        <end position="305"/>
    </location>
</feature>
<feature type="transmembrane region" description="Helical; Name=7" evidence="1">
    <location>
        <begin position="306"/>
        <end position="326"/>
    </location>
</feature>
<feature type="topological domain" description="Cytoplasmic" evidence="1">
    <location>
        <begin position="327"/>
        <end position="382"/>
    </location>
</feature>
<feature type="region of interest" description="Disordered" evidence="3">
    <location>
        <begin position="1"/>
        <end position="39"/>
    </location>
</feature>
<feature type="region of interest" description="Disordered" evidence="3">
    <location>
        <begin position="363"/>
        <end position="382"/>
    </location>
</feature>
<feature type="lipid moiety-binding region" description="S-palmitoyl cysteine" evidence="1">
    <location>
        <position position="343"/>
    </location>
</feature>
<feature type="glycosylation site" description="N-linked (GlcNAc...) asparagine" evidence="1">
    <location>
        <position position="11"/>
    </location>
</feature>
<feature type="disulfide bond" evidence="2">
    <location>
        <begin position="124"/>
        <end position="204"/>
    </location>
</feature>
<feature type="sequence conflict" description="In Ref. 3; AAD13777." evidence="4" ref="3">
    <original>I</original>
    <variation>L</variation>
    <location>
        <position position="4"/>
    </location>
</feature>
<feature type="sequence conflict" description="In Ref. 3; AAD13777." evidence="4" ref="3">
    <original>L</original>
    <variation>V</variation>
    <location>
        <position position="179"/>
    </location>
</feature>
<feature type="sequence conflict" description="In Ref. 3; AAD13777." evidence="4" ref="3">
    <original>I</original>
    <variation>N</variation>
    <location>
        <position position="215"/>
    </location>
</feature>
<feature type="sequence conflict" description="In Ref. 3; AAD13777." evidence="4" ref="3">
    <original>A</original>
    <variation>V</variation>
    <location>
        <position position="366"/>
    </location>
</feature>
<accession>O02836</accession>
<accession>Q9TSI1</accession>
<keyword id="KW-1003">Cell membrane</keyword>
<keyword id="KW-1015">Disulfide bond</keyword>
<keyword id="KW-0297">G-protein coupled receptor</keyword>
<keyword id="KW-0325">Glycoprotein</keyword>
<keyword id="KW-0449">Lipoprotein</keyword>
<keyword id="KW-0472">Membrane</keyword>
<keyword id="KW-0564">Palmitate</keyword>
<keyword id="KW-0675">Receptor</keyword>
<keyword id="KW-1185">Reference proteome</keyword>
<keyword id="KW-0807">Transducer</keyword>
<keyword id="KW-0812">Transmembrane</keyword>
<keyword id="KW-1133">Transmembrane helix</keyword>
<name>NPY2R_PIG</name>
<proteinExistence type="evidence at transcript level"/>
<protein>
    <recommendedName>
        <fullName>Neuropeptide Y receptor type 2</fullName>
        <shortName>NPY2-R</shortName>
    </recommendedName>
    <alternativeName>
        <fullName>NPY-Y2 receptor</fullName>
        <shortName>Y2 receptor</shortName>
    </alternativeName>
</protein>
<organism>
    <name type="scientific">Sus scrofa</name>
    <name type="common">Pig</name>
    <dbReference type="NCBI Taxonomy" id="9823"/>
    <lineage>
        <taxon>Eukaryota</taxon>
        <taxon>Metazoa</taxon>
        <taxon>Chordata</taxon>
        <taxon>Craniata</taxon>
        <taxon>Vertebrata</taxon>
        <taxon>Euteleostomi</taxon>
        <taxon>Mammalia</taxon>
        <taxon>Eutheria</taxon>
        <taxon>Laurasiatheria</taxon>
        <taxon>Artiodactyla</taxon>
        <taxon>Suina</taxon>
        <taxon>Suidae</taxon>
        <taxon>Sus</taxon>
    </lineage>
</organism>